<comment type="function">
    <text evidence="1">Protease with a carboxypeptidase B-like function involved in the C-terminal processing of the lysine and arginine residues from protein precursors. Promotes cell fusion and is involved in the programmed cell death (By similarity).</text>
</comment>
<comment type="catalytic activity">
    <reaction>
        <text>Preferential release of a C-terminal arginine or lysine residue.</text>
        <dbReference type="EC" id="3.4.16.6"/>
    </reaction>
</comment>
<comment type="subcellular location">
    <subcellularLocation>
        <location evidence="1">Golgi apparatus</location>
        <location evidence="1">trans-Golgi network membrane</location>
        <topology evidence="1">Single-pass type I membrane protein</topology>
    </subcellularLocation>
</comment>
<comment type="similarity">
    <text evidence="5">Belongs to the peptidase S10 family.</text>
</comment>
<organism>
    <name type="scientific">Metarhizium robertsii (strain ARSEF 23 / ATCC MYA-3075)</name>
    <name type="common">Metarhizium anisopliae (strain ARSEF 23)</name>
    <dbReference type="NCBI Taxonomy" id="655844"/>
    <lineage>
        <taxon>Eukaryota</taxon>
        <taxon>Fungi</taxon>
        <taxon>Dikarya</taxon>
        <taxon>Ascomycota</taxon>
        <taxon>Pezizomycotina</taxon>
        <taxon>Sordariomycetes</taxon>
        <taxon>Hypocreomycetidae</taxon>
        <taxon>Hypocreales</taxon>
        <taxon>Clavicipitaceae</taxon>
        <taxon>Metarhizium</taxon>
    </lineage>
</organism>
<feature type="signal peptide" evidence="2">
    <location>
        <begin position="1"/>
        <end position="28"/>
    </location>
</feature>
<feature type="chain" id="PRO_0000411927" description="Pheromone-processing carboxypeptidase KEX1">
    <location>
        <begin position="29"/>
        <end position="616"/>
    </location>
</feature>
<feature type="topological domain" description="Lumenal" evidence="2">
    <location>
        <begin position="29"/>
        <end position="516"/>
    </location>
</feature>
<feature type="transmembrane region" description="Helical" evidence="2">
    <location>
        <begin position="517"/>
        <end position="537"/>
    </location>
</feature>
<feature type="topological domain" description="Cytoplasmic" evidence="2">
    <location>
        <begin position="538"/>
        <end position="616"/>
    </location>
</feature>
<feature type="region of interest" description="Disordered" evidence="4">
    <location>
        <begin position="469"/>
        <end position="502"/>
    </location>
</feature>
<feature type="region of interest" description="Disordered" evidence="4">
    <location>
        <begin position="578"/>
        <end position="616"/>
    </location>
</feature>
<feature type="compositionally biased region" description="Basic and acidic residues" evidence="4">
    <location>
        <begin position="474"/>
        <end position="484"/>
    </location>
</feature>
<feature type="compositionally biased region" description="Acidic residues" evidence="4">
    <location>
        <begin position="604"/>
        <end position="616"/>
    </location>
</feature>
<feature type="active site" evidence="3">
    <location>
        <position position="183"/>
    </location>
</feature>
<feature type="active site" evidence="3">
    <location>
        <position position="382"/>
    </location>
</feature>
<feature type="active site" evidence="3">
    <location>
        <position position="444"/>
    </location>
</feature>
<feature type="glycosylation site" description="N-linked (GlcNAc...) asparagine" evidence="2">
    <location>
        <position position="119"/>
    </location>
</feature>
<feature type="glycosylation site" description="N-linked (GlcNAc...) asparagine" evidence="2">
    <location>
        <position position="200"/>
    </location>
</feature>
<feature type="glycosylation site" description="N-linked (GlcNAc...) asparagine" evidence="2">
    <location>
        <position position="357"/>
    </location>
</feature>
<feature type="glycosylation site" description="N-linked (GlcNAc...) asparagine" evidence="2">
    <location>
        <position position="433"/>
    </location>
</feature>
<feature type="glycosylation site" description="N-linked (GlcNAc...) asparagine" evidence="2">
    <location>
        <position position="441"/>
    </location>
</feature>
<feature type="glycosylation site" description="N-linked (GlcNAc...) asparagine" evidence="2">
    <location>
        <position position="493"/>
    </location>
</feature>
<name>KEX1_METRA</name>
<sequence length="616" mass="68961">MAPRFSWSLATSWHALAILALWPASTLAGDKSAADYYVRELPGLPKNSPPIKMHAGHIEVTPETNGNLFFWHFQNNHIANRQRTVIWLNGGPGCSSEDGALMEVGPYRVTKDNALTLNNGTWNEFANLLFVDNPVGTGFSYVDTNSYIHGLNAMATQFITFLEKFFALFPEYQSDDLYIAGESYAGQHIPYIARAILDRNKSKSRAETWNLGGLLIGNGWISPQDQSSAYLKFSLERGLIEKGSDNAQQLQQMQRICDKEMSINPGHVDYPECESILNKILELTRVGSGDQECINMYDVRLRDSAPSCGMNWPPDLKYVGPYLRQPQVISALNLDKQRNTGWQECNSMVNANFRNQNATASISLLPDILKEVPILLFSGAEDLICNHVGTEELISNLAWNEGKGFEVTPGNWAPRRQWTFEGEVAGFWQEARNLTYVLFHNASHMVPFDYPRRSRDMLDRFMKVDISSIGGEPSDSRIDGEKGPDTSVGGAKNNTQQHEEETKQKLKEAQWLAYQRSGEVVLVIVIIAASVWGYFVWRQRRKGTAYSALQSDEAAGQSRTGLAAFHNRQSDRDLEAAAFDETTVDNIPLQESIGRGESKYSIGDDSDEEEGETNKT</sequence>
<evidence type="ECO:0000250" key="1"/>
<evidence type="ECO:0000255" key="2"/>
<evidence type="ECO:0000255" key="3">
    <source>
        <dbReference type="PROSITE-ProRule" id="PRU10074"/>
    </source>
</evidence>
<evidence type="ECO:0000256" key="4">
    <source>
        <dbReference type="SAM" id="MobiDB-lite"/>
    </source>
</evidence>
<evidence type="ECO:0000305" key="5"/>
<reference key="1">
    <citation type="journal article" date="2011" name="PLoS Genet.">
        <title>Genome sequencing and comparative transcriptomics of the model entomopathogenic fungi Metarhizium anisopliae and M. acridum.</title>
        <authorList>
            <person name="Gao Q."/>
            <person name="Jin K."/>
            <person name="Ying S.-H."/>
            <person name="Zhang Y."/>
            <person name="Xiao G."/>
            <person name="Shang Y."/>
            <person name="Duan Z."/>
            <person name="Hu X."/>
            <person name="Xie X.-Q."/>
            <person name="Zhou G."/>
            <person name="Peng G."/>
            <person name="Luo Z."/>
            <person name="Huang W."/>
            <person name="Wang B."/>
            <person name="Fang W."/>
            <person name="Wang S."/>
            <person name="Zhong Y."/>
            <person name="Ma L.-J."/>
            <person name="St Leger R.J."/>
            <person name="Zhao G.-P."/>
            <person name="Pei Y."/>
            <person name="Feng M.-G."/>
            <person name="Xia Y."/>
            <person name="Wang C."/>
        </authorList>
    </citation>
    <scope>NUCLEOTIDE SEQUENCE [LARGE SCALE GENOMIC DNA]</scope>
    <source>
        <strain>ARSEF 23 / ATCC MYA-3075</strain>
    </source>
</reference>
<reference key="2">
    <citation type="journal article" date="2014" name="Proc. Natl. Acad. Sci. U.S.A.">
        <title>Trajectory and genomic determinants of fungal-pathogen speciation and host adaptation.</title>
        <authorList>
            <person name="Hu X."/>
            <person name="Xiao G."/>
            <person name="Zheng P."/>
            <person name="Shang Y."/>
            <person name="Su Y."/>
            <person name="Zhang X."/>
            <person name="Liu X."/>
            <person name="Zhan S."/>
            <person name="St Leger R.J."/>
            <person name="Wang C."/>
        </authorList>
    </citation>
    <scope>GENOME REANNOTATION</scope>
    <source>
        <strain>ARSEF 23 / ATCC MYA-3075</strain>
    </source>
</reference>
<proteinExistence type="inferred from homology"/>
<protein>
    <recommendedName>
        <fullName>Pheromone-processing carboxypeptidase KEX1</fullName>
        <ecNumber>3.4.16.6</ecNumber>
    </recommendedName>
    <alternativeName>
        <fullName>Carboxypeptidase D</fullName>
    </alternativeName>
</protein>
<gene>
    <name type="primary">KEX1</name>
    <name type="ORF">MAA_02969</name>
</gene>
<dbReference type="EC" id="3.4.16.6"/>
<dbReference type="EMBL" id="ADNJ02000004">
    <property type="protein sequence ID" value="EFZ01740.1"/>
    <property type="molecule type" value="Genomic_DNA"/>
</dbReference>
<dbReference type="RefSeq" id="XP_007819158.1">
    <property type="nucleotide sequence ID" value="XM_007820967.1"/>
</dbReference>
<dbReference type="SMR" id="E9ESM3"/>
<dbReference type="ESTHER" id="metaq-kex1">
    <property type="family name" value="Carboxypeptidase_S10"/>
</dbReference>
<dbReference type="MEROPS" id="S10.007"/>
<dbReference type="GlyCosmos" id="E9ESM3">
    <property type="glycosylation" value="6 sites, No reported glycans"/>
</dbReference>
<dbReference type="GeneID" id="19257255"/>
<dbReference type="KEGG" id="maj:MAA_02969"/>
<dbReference type="HOGENOM" id="CLU_008523_11_0_1"/>
<dbReference type="OrthoDB" id="443318at2759"/>
<dbReference type="Proteomes" id="UP000002498">
    <property type="component" value="Unassembled WGS sequence"/>
</dbReference>
<dbReference type="GO" id="GO:0016020">
    <property type="term" value="C:membrane"/>
    <property type="evidence" value="ECO:0007669"/>
    <property type="project" value="UniProtKB-KW"/>
</dbReference>
<dbReference type="GO" id="GO:0005802">
    <property type="term" value="C:trans-Golgi network"/>
    <property type="evidence" value="ECO:0007669"/>
    <property type="project" value="TreeGrafter"/>
</dbReference>
<dbReference type="GO" id="GO:0004185">
    <property type="term" value="F:serine-type carboxypeptidase activity"/>
    <property type="evidence" value="ECO:0007669"/>
    <property type="project" value="UniProtKB-EC"/>
</dbReference>
<dbReference type="GO" id="GO:0006915">
    <property type="term" value="P:apoptotic process"/>
    <property type="evidence" value="ECO:0007669"/>
    <property type="project" value="UniProtKB-KW"/>
</dbReference>
<dbReference type="GO" id="GO:0006508">
    <property type="term" value="P:proteolysis"/>
    <property type="evidence" value="ECO:0007669"/>
    <property type="project" value="UniProtKB-KW"/>
</dbReference>
<dbReference type="FunFam" id="3.40.50.1820:FF:000121">
    <property type="entry name" value="Carboxypeptidase D"/>
    <property type="match status" value="1"/>
</dbReference>
<dbReference type="Gene3D" id="3.40.50.1820">
    <property type="entry name" value="alpha/beta hydrolase"/>
    <property type="match status" value="1"/>
</dbReference>
<dbReference type="InterPro" id="IPR029058">
    <property type="entry name" value="AB_hydrolase_fold"/>
</dbReference>
<dbReference type="InterPro" id="IPR001563">
    <property type="entry name" value="Peptidase_S10"/>
</dbReference>
<dbReference type="InterPro" id="IPR018202">
    <property type="entry name" value="Ser_caboxypep_ser_AS"/>
</dbReference>
<dbReference type="PANTHER" id="PTHR11802:SF190">
    <property type="entry name" value="PHEROMONE-PROCESSING CARBOXYPEPTIDASE KEX1"/>
    <property type="match status" value="1"/>
</dbReference>
<dbReference type="PANTHER" id="PTHR11802">
    <property type="entry name" value="SERINE PROTEASE FAMILY S10 SERINE CARBOXYPEPTIDASE"/>
    <property type="match status" value="1"/>
</dbReference>
<dbReference type="Pfam" id="PF00450">
    <property type="entry name" value="Peptidase_S10"/>
    <property type="match status" value="1"/>
</dbReference>
<dbReference type="PRINTS" id="PR00724">
    <property type="entry name" value="CRBOXYPTASEC"/>
</dbReference>
<dbReference type="SUPFAM" id="SSF53474">
    <property type="entry name" value="alpha/beta-Hydrolases"/>
    <property type="match status" value="1"/>
</dbReference>
<dbReference type="PROSITE" id="PS00131">
    <property type="entry name" value="CARBOXYPEPT_SER_SER"/>
    <property type="match status" value="1"/>
</dbReference>
<accession>E9ESM3</accession>
<keyword id="KW-0053">Apoptosis</keyword>
<keyword id="KW-0121">Carboxypeptidase</keyword>
<keyword id="KW-0325">Glycoprotein</keyword>
<keyword id="KW-0333">Golgi apparatus</keyword>
<keyword id="KW-0378">Hydrolase</keyword>
<keyword id="KW-0472">Membrane</keyword>
<keyword id="KW-0645">Protease</keyword>
<keyword id="KW-0732">Signal</keyword>
<keyword id="KW-0812">Transmembrane</keyword>
<keyword id="KW-1133">Transmembrane helix</keyword>